<comment type="function">
    <text evidence="1">Required for maturation of urease via the functional incorporation of the urease nickel metallocenter.</text>
</comment>
<comment type="subunit">
    <text evidence="1">UreD, UreF and UreG form a complex that acts as a GTP-hydrolysis-dependent molecular chaperone, activating the urease apoprotein by helping to assemble the nickel containing metallocenter of UreC. The UreE protein probably delivers the nickel.</text>
</comment>
<comment type="subcellular location">
    <subcellularLocation>
        <location evidence="1">Cytoplasm</location>
    </subcellularLocation>
</comment>
<comment type="similarity">
    <text evidence="1">Belongs to the UreF family.</text>
</comment>
<keyword id="KW-0143">Chaperone</keyword>
<keyword id="KW-0963">Cytoplasm</keyword>
<keyword id="KW-0996">Nickel insertion</keyword>
<name>UREF2_BRUAB</name>
<dbReference type="EMBL" id="AE017223">
    <property type="protein sequence ID" value="AAX74688.1"/>
    <property type="molecule type" value="Genomic_DNA"/>
</dbReference>
<dbReference type="RefSeq" id="WP_002966883.1">
    <property type="nucleotide sequence ID" value="NC_006932.1"/>
</dbReference>
<dbReference type="SMR" id="Q57CE6"/>
<dbReference type="EnsemblBacteria" id="AAX74688">
    <property type="protein sequence ID" value="AAX74688"/>
    <property type="gene ID" value="BruAb1_1357"/>
</dbReference>
<dbReference type="KEGG" id="bmb:BruAb1_1357"/>
<dbReference type="HOGENOM" id="CLU_049215_4_0_5"/>
<dbReference type="Proteomes" id="UP000000540">
    <property type="component" value="Chromosome I"/>
</dbReference>
<dbReference type="GO" id="GO:0005737">
    <property type="term" value="C:cytoplasm"/>
    <property type="evidence" value="ECO:0007669"/>
    <property type="project" value="UniProtKB-SubCell"/>
</dbReference>
<dbReference type="GO" id="GO:0016151">
    <property type="term" value="F:nickel cation binding"/>
    <property type="evidence" value="ECO:0007669"/>
    <property type="project" value="UniProtKB-UniRule"/>
</dbReference>
<dbReference type="Gene3D" id="1.10.4190.10">
    <property type="entry name" value="Urease accessory protein UreF"/>
    <property type="match status" value="1"/>
</dbReference>
<dbReference type="HAMAP" id="MF_01385">
    <property type="entry name" value="UreF"/>
    <property type="match status" value="1"/>
</dbReference>
<dbReference type="InterPro" id="IPR002639">
    <property type="entry name" value="UreF"/>
</dbReference>
<dbReference type="InterPro" id="IPR038277">
    <property type="entry name" value="UreF_sf"/>
</dbReference>
<dbReference type="PANTHER" id="PTHR33620">
    <property type="entry name" value="UREASE ACCESSORY PROTEIN F"/>
    <property type="match status" value="1"/>
</dbReference>
<dbReference type="PANTHER" id="PTHR33620:SF1">
    <property type="entry name" value="UREASE ACCESSORY PROTEIN F"/>
    <property type="match status" value="1"/>
</dbReference>
<dbReference type="Pfam" id="PF01730">
    <property type="entry name" value="UreF"/>
    <property type="match status" value="1"/>
</dbReference>
<dbReference type="PIRSF" id="PIRSF009467">
    <property type="entry name" value="Ureas_acces_UreF"/>
    <property type="match status" value="1"/>
</dbReference>
<reference key="1">
    <citation type="journal article" date="2005" name="J. Bacteriol.">
        <title>Completion of the genome sequence of Brucella abortus and comparison to the highly similar genomes of Brucella melitensis and Brucella suis.</title>
        <authorList>
            <person name="Halling S.M."/>
            <person name="Peterson-Burch B.D."/>
            <person name="Bricker B.J."/>
            <person name="Zuerner R.L."/>
            <person name="Qing Z."/>
            <person name="Li L.-L."/>
            <person name="Kapur V."/>
            <person name="Alt D.P."/>
            <person name="Olsen S.C."/>
        </authorList>
    </citation>
    <scope>NUCLEOTIDE SEQUENCE [LARGE SCALE GENOMIC DNA]</scope>
    <source>
        <strain>9-941</strain>
    </source>
</reference>
<feature type="chain" id="PRO_0000344084" description="Urease accessory protein UreF 2">
    <location>
        <begin position="1"/>
        <end position="243"/>
    </location>
</feature>
<gene>
    <name evidence="1" type="primary">ureF2</name>
    <name type="ordered locus">BruAb1_1357</name>
</gene>
<protein>
    <recommendedName>
        <fullName evidence="1">Urease accessory protein UreF 2</fullName>
    </recommendedName>
</protein>
<accession>Q57CE6</accession>
<organism>
    <name type="scientific">Brucella abortus biovar 1 (strain 9-941)</name>
    <dbReference type="NCBI Taxonomy" id="262698"/>
    <lineage>
        <taxon>Bacteria</taxon>
        <taxon>Pseudomonadati</taxon>
        <taxon>Pseudomonadota</taxon>
        <taxon>Alphaproteobacteria</taxon>
        <taxon>Hyphomicrobiales</taxon>
        <taxon>Brucellaceae</taxon>
        <taxon>Brucella/Ochrobactrum group</taxon>
        <taxon>Brucella</taxon>
    </lineage>
</organism>
<evidence type="ECO:0000255" key="1">
    <source>
        <dbReference type="HAMAP-Rule" id="MF_01385"/>
    </source>
</evidence>
<proteinExistence type="inferred from homology"/>
<sequence length="243" mass="26465">MTMRTATITEFSSSYRSLPGLLHLLQFGDSALPIGGFSFSNGLESAIQQNLVHDKETLREFTLTAMNQAATSDGIALLTAHRAARADDRGALQVIDKAVFERKLNEETRLMTVRMGRKLCELSASIIDDRLNRDWLECIKTAETPGTHPVSLGLAFAALDVDGRDAFGAQQYGVATTILGAALRLMRVSFMDTQKILLEATSTVAPAYEEIADAGIEDMASFAPMVDILAAVHVKGHVRMFMN</sequence>